<reference key="1">
    <citation type="submission" date="1994-09" db="EMBL/GenBank/DDBJ databases">
        <authorList>
            <person name="Smith D.R."/>
            <person name="Robison K."/>
        </authorList>
    </citation>
    <scope>NUCLEOTIDE SEQUENCE [GENOMIC DNA]</scope>
</reference>
<reference key="2">
    <citation type="journal article" date="2001" name="Nature">
        <title>Massive gene decay in the leprosy bacillus.</title>
        <authorList>
            <person name="Cole S.T."/>
            <person name="Eiglmeier K."/>
            <person name="Parkhill J."/>
            <person name="James K.D."/>
            <person name="Thomson N.R."/>
            <person name="Wheeler P.R."/>
            <person name="Honore N."/>
            <person name="Garnier T."/>
            <person name="Churcher C.M."/>
            <person name="Harris D.E."/>
            <person name="Mungall K.L."/>
            <person name="Basham D."/>
            <person name="Brown D."/>
            <person name="Chillingworth T."/>
            <person name="Connor R."/>
            <person name="Davies R.M."/>
            <person name="Devlin K."/>
            <person name="Duthoy S."/>
            <person name="Feltwell T."/>
            <person name="Fraser A."/>
            <person name="Hamlin N."/>
            <person name="Holroyd S."/>
            <person name="Hornsby T."/>
            <person name="Jagels K."/>
            <person name="Lacroix C."/>
            <person name="Maclean J."/>
            <person name="Moule S."/>
            <person name="Murphy L.D."/>
            <person name="Oliver K."/>
            <person name="Quail M.A."/>
            <person name="Rajandream M.A."/>
            <person name="Rutherford K.M."/>
            <person name="Rutter S."/>
            <person name="Seeger K."/>
            <person name="Simon S."/>
            <person name="Simmonds M."/>
            <person name="Skelton J."/>
            <person name="Squares R."/>
            <person name="Squares S."/>
            <person name="Stevens K."/>
            <person name="Taylor K."/>
            <person name="Whitehead S."/>
            <person name="Woodward J.R."/>
            <person name="Barrell B.G."/>
        </authorList>
    </citation>
    <scope>NUCLEOTIDE SEQUENCE [LARGE SCALE GENOMIC DNA]</scope>
    <source>
        <strain>TN</strain>
    </source>
</reference>
<gene>
    <name type="primary">atpC</name>
    <name type="ordered locus">ML1146</name>
</gene>
<sequence length="121" mass="13338">MDELNIEIVAVDRKIWSGKGTFLFTRTTAGEIGILPRHIPMVAQLVDDNMVRIEREGEKDLRVAVDGGFLSVTEERVSILAESAEFDSEIDENAAKQDAESDDPRIAARGRARLRAVGAID</sequence>
<dbReference type="EMBL" id="U15186">
    <property type="protein sequence ID" value="AAA63105.1"/>
    <property type="status" value="ALT_INIT"/>
    <property type="molecule type" value="Genomic_DNA"/>
</dbReference>
<dbReference type="EMBL" id="AL583920">
    <property type="protein sequence ID" value="CAC31527.1"/>
    <property type="molecule type" value="Genomic_DNA"/>
</dbReference>
<dbReference type="PIR" id="D87052">
    <property type="entry name" value="D87052"/>
</dbReference>
<dbReference type="RefSeq" id="NP_301840.1">
    <property type="nucleotide sequence ID" value="NC_002677.1"/>
</dbReference>
<dbReference type="RefSeq" id="WP_010908164.1">
    <property type="nucleotide sequence ID" value="NC_002677.1"/>
</dbReference>
<dbReference type="BMRB" id="P45822"/>
<dbReference type="SMR" id="P45822"/>
<dbReference type="STRING" id="272631.gene:17574973"/>
<dbReference type="KEGG" id="mle:ML1146"/>
<dbReference type="PATRIC" id="fig|272631.5.peg.2068"/>
<dbReference type="Leproma" id="ML1146"/>
<dbReference type="eggNOG" id="COG0355">
    <property type="taxonomic scope" value="Bacteria"/>
</dbReference>
<dbReference type="HOGENOM" id="CLU_084338_4_0_11"/>
<dbReference type="OrthoDB" id="9791445at2"/>
<dbReference type="Proteomes" id="UP000000806">
    <property type="component" value="Chromosome"/>
</dbReference>
<dbReference type="GO" id="GO:0005886">
    <property type="term" value="C:plasma membrane"/>
    <property type="evidence" value="ECO:0007669"/>
    <property type="project" value="UniProtKB-SubCell"/>
</dbReference>
<dbReference type="GO" id="GO:0045259">
    <property type="term" value="C:proton-transporting ATP synthase complex"/>
    <property type="evidence" value="ECO:0007669"/>
    <property type="project" value="UniProtKB-KW"/>
</dbReference>
<dbReference type="GO" id="GO:0005524">
    <property type="term" value="F:ATP binding"/>
    <property type="evidence" value="ECO:0007669"/>
    <property type="project" value="UniProtKB-UniRule"/>
</dbReference>
<dbReference type="GO" id="GO:0046933">
    <property type="term" value="F:proton-transporting ATP synthase activity, rotational mechanism"/>
    <property type="evidence" value="ECO:0007669"/>
    <property type="project" value="UniProtKB-UniRule"/>
</dbReference>
<dbReference type="CDD" id="cd12152">
    <property type="entry name" value="F1-ATPase_delta"/>
    <property type="match status" value="1"/>
</dbReference>
<dbReference type="Gene3D" id="2.60.15.10">
    <property type="entry name" value="F0F1 ATP synthase delta/epsilon subunit, N-terminal"/>
    <property type="match status" value="1"/>
</dbReference>
<dbReference type="HAMAP" id="MF_00530">
    <property type="entry name" value="ATP_synth_epsil_bac"/>
    <property type="match status" value="1"/>
</dbReference>
<dbReference type="InterPro" id="IPR001469">
    <property type="entry name" value="ATP_synth_F1_dsu/esu"/>
</dbReference>
<dbReference type="InterPro" id="IPR020546">
    <property type="entry name" value="ATP_synth_F1_dsu/esu_N"/>
</dbReference>
<dbReference type="InterPro" id="IPR036771">
    <property type="entry name" value="ATPsynth_dsu/esu_N"/>
</dbReference>
<dbReference type="NCBIfam" id="TIGR01216">
    <property type="entry name" value="ATP_synt_epsi"/>
    <property type="match status" value="1"/>
</dbReference>
<dbReference type="NCBIfam" id="NF009977">
    <property type="entry name" value="PRK13442.1"/>
    <property type="match status" value="1"/>
</dbReference>
<dbReference type="PANTHER" id="PTHR13822">
    <property type="entry name" value="ATP SYNTHASE DELTA/EPSILON CHAIN"/>
    <property type="match status" value="1"/>
</dbReference>
<dbReference type="PANTHER" id="PTHR13822:SF10">
    <property type="entry name" value="ATP SYNTHASE EPSILON CHAIN, CHLOROPLASTIC"/>
    <property type="match status" value="1"/>
</dbReference>
<dbReference type="Pfam" id="PF02823">
    <property type="entry name" value="ATP-synt_DE_N"/>
    <property type="match status" value="1"/>
</dbReference>
<dbReference type="SUPFAM" id="SSF51344">
    <property type="entry name" value="Epsilon subunit of F1F0-ATP synthase N-terminal domain"/>
    <property type="match status" value="1"/>
</dbReference>
<feature type="chain" id="PRO_0000188161" description="ATP synthase epsilon chain">
    <location>
        <begin position="1"/>
        <end position="121"/>
    </location>
</feature>
<proteinExistence type="inferred from homology"/>
<keyword id="KW-0066">ATP synthesis</keyword>
<keyword id="KW-1003">Cell membrane</keyword>
<keyword id="KW-0139">CF(1)</keyword>
<keyword id="KW-0375">Hydrogen ion transport</keyword>
<keyword id="KW-0406">Ion transport</keyword>
<keyword id="KW-0472">Membrane</keyword>
<keyword id="KW-1185">Reference proteome</keyword>
<keyword id="KW-0813">Transport</keyword>
<organism>
    <name type="scientific">Mycobacterium leprae (strain TN)</name>
    <dbReference type="NCBI Taxonomy" id="272631"/>
    <lineage>
        <taxon>Bacteria</taxon>
        <taxon>Bacillati</taxon>
        <taxon>Actinomycetota</taxon>
        <taxon>Actinomycetes</taxon>
        <taxon>Mycobacteriales</taxon>
        <taxon>Mycobacteriaceae</taxon>
        <taxon>Mycobacterium</taxon>
    </lineage>
</organism>
<comment type="function">
    <text evidence="1">Produces ATP from ADP in the presence of a proton gradient across the membrane.</text>
</comment>
<comment type="subunit">
    <text>F-type ATPases have 2 components, CF(1) - the catalytic core - and CF(0) - the membrane proton channel. CF(1) has five subunits: alpha(3), beta(3), gamma(1), delta(1), epsilon(1). CF(0) has three main subunits: a, b and c.</text>
</comment>
<comment type="subcellular location">
    <subcellularLocation>
        <location evidence="1">Cell membrane</location>
        <topology evidence="1">Peripheral membrane protein</topology>
    </subcellularLocation>
</comment>
<comment type="similarity">
    <text evidence="2">Belongs to the ATPase epsilon chain family.</text>
</comment>
<comment type="sequence caution" evidence="2">
    <conflict type="erroneous initiation">
        <sequence resource="EMBL-CDS" id="AAA63105"/>
    </conflict>
</comment>
<protein>
    <recommendedName>
        <fullName>ATP synthase epsilon chain</fullName>
    </recommendedName>
    <alternativeName>
        <fullName>ATP synthase F1 sector epsilon subunit</fullName>
    </alternativeName>
    <alternativeName>
        <fullName>F-ATPase epsilon subunit</fullName>
    </alternativeName>
</protein>
<name>ATPE_MYCLE</name>
<accession>P45822</accession>
<evidence type="ECO:0000250" key="1"/>
<evidence type="ECO:0000305" key="2"/>